<comment type="function">
    <text evidence="3">Integral membrane subunit of the KtrCD potassium uptake transporter. The 2 major potassium transporter complexes KtrAB and KtrCD confer resistance to both suddenly imposed and prolonged osmotic stress.</text>
</comment>
<comment type="subunit">
    <text evidence="1">Homodimer. Part of the KtrCD complex formed by an octameric catalytic ring of KtrC and a membrane associated dimer of KtrD forming a potassium channel (By similarity).</text>
</comment>
<comment type="subcellular location">
    <subcellularLocation>
        <location evidence="4">Cell membrane</location>
        <topology evidence="4">Multi-pass membrane protein</topology>
    </subcellularLocation>
</comment>
<comment type="disruption phenotype">
    <text evidence="3">Impaired potassium uptake.</text>
</comment>
<comment type="similarity">
    <text evidence="4">Belongs to the TrkH potassium transport family. Ktr (TC 2.A.38.4) subfamily.</text>
</comment>
<protein>
    <recommendedName>
        <fullName>Ktr system potassium uptake protein D</fullName>
        <shortName>K(+)-uptake protein KtrD</shortName>
    </recommendedName>
</protein>
<organism>
    <name type="scientific">Bacillus subtilis (strain 168)</name>
    <dbReference type="NCBI Taxonomy" id="224308"/>
    <lineage>
        <taxon>Bacteria</taxon>
        <taxon>Bacillati</taxon>
        <taxon>Bacillota</taxon>
        <taxon>Bacilli</taxon>
        <taxon>Bacillales</taxon>
        <taxon>Bacillaceae</taxon>
        <taxon>Bacillus</taxon>
    </lineage>
</organism>
<keyword id="KW-1003">Cell membrane</keyword>
<keyword id="KW-0406">Ion transport</keyword>
<keyword id="KW-0472">Membrane</keyword>
<keyword id="KW-0630">Potassium</keyword>
<keyword id="KW-0633">Potassium transport</keyword>
<keyword id="KW-1185">Reference proteome</keyword>
<keyword id="KW-0812">Transmembrane</keyword>
<keyword id="KW-1133">Transmembrane helix</keyword>
<keyword id="KW-0813">Transport</keyword>
<dbReference type="EMBL" id="AL009126">
    <property type="protein sequence ID" value="CAB13223.1"/>
    <property type="molecule type" value="Genomic_DNA"/>
</dbReference>
<dbReference type="PIR" id="H69862">
    <property type="entry name" value="H69862"/>
</dbReference>
<dbReference type="RefSeq" id="NP_389233.1">
    <property type="nucleotide sequence ID" value="NC_000964.3"/>
</dbReference>
<dbReference type="RefSeq" id="WP_003244672.1">
    <property type="nucleotide sequence ID" value="NZ_OZ025638.1"/>
</dbReference>
<dbReference type="SMR" id="O31658"/>
<dbReference type="FunCoup" id="O31658">
    <property type="interactions" value="173"/>
</dbReference>
<dbReference type="STRING" id="224308.BSU13500"/>
<dbReference type="TCDB" id="2.A.38.4.4">
    <property type="family name" value="the k(+) transporter (trk) family"/>
</dbReference>
<dbReference type="PaxDb" id="224308-BSU13500"/>
<dbReference type="EnsemblBacteria" id="CAB13223">
    <property type="protein sequence ID" value="CAB13223"/>
    <property type="gene ID" value="BSU_13500"/>
</dbReference>
<dbReference type="GeneID" id="939342"/>
<dbReference type="KEGG" id="bsu:BSU13500"/>
<dbReference type="PATRIC" id="fig|224308.179.peg.1465"/>
<dbReference type="eggNOG" id="COG0168">
    <property type="taxonomic scope" value="Bacteria"/>
</dbReference>
<dbReference type="InParanoid" id="O31658"/>
<dbReference type="OrthoDB" id="9810952at2"/>
<dbReference type="PhylomeDB" id="O31658"/>
<dbReference type="BioCyc" id="BSUB:BSU13500-MONOMER"/>
<dbReference type="Proteomes" id="UP000001570">
    <property type="component" value="Chromosome"/>
</dbReference>
<dbReference type="GO" id="GO:0005886">
    <property type="term" value="C:plasma membrane"/>
    <property type="evidence" value="ECO:0000318"/>
    <property type="project" value="GO_Central"/>
</dbReference>
<dbReference type="GO" id="GO:0015079">
    <property type="term" value="F:potassium ion transmembrane transporter activity"/>
    <property type="evidence" value="ECO:0000318"/>
    <property type="project" value="GO_Central"/>
</dbReference>
<dbReference type="GO" id="GO:0071805">
    <property type="term" value="P:potassium ion transmembrane transport"/>
    <property type="evidence" value="ECO:0000318"/>
    <property type="project" value="GO_Central"/>
</dbReference>
<dbReference type="InterPro" id="IPR003445">
    <property type="entry name" value="Cat_transpt"/>
</dbReference>
<dbReference type="PANTHER" id="PTHR32024:SF4">
    <property type="entry name" value="KTR SYSTEM POTASSIUM UPTAKE PROTEIN D"/>
    <property type="match status" value="1"/>
</dbReference>
<dbReference type="PANTHER" id="PTHR32024">
    <property type="entry name" value="TRK SYSTEM POTASSIUM UPTAKE PROTEIN TRKG-RELATED"/>
    <property type="match status" value="1"/>
</dbReference>
<dbReference type="Pfam" id="PF02386">
    <property type="entry name" value="TrkH"/>
    <property type="match status" value="1"/>
</dbReference>
<name>KTRD_BACSU</name>
<gene>
    <name type="primary">ktrD</name>
    <name type="synonym">ykrM</name>
    <name type="ordered locus">BSU13500</name>
</gene>
<sequence length="449" mass="49425">MRLKFGKLIQALSPAQLIALYYFLAVTVAVILLSLPAAHKPGADWTFIDALFTAVSSVSVTGLTVVDTADTFSTIGIFILAFVLQFGGIGIMTLGTFIWLIMGKRIGLKERKLIMVDQNQSQFSGIVNLMKQVLFLILWIEFFGGLILGTYFLTYYDSYQEAYLHGFFASISATTNGGFDITGNSMIPFRHDYFVQFITMLLIIFGAIGFPVLVEVKDFLFSKHRRYPFTLFTKITTITFGSLVLFGAIGIFALEANHAFAGKSWHDILFLSLFQSTATRSGGLATIDISQLSDSTLFFICALMFIGASPSSVGGGIRTTTFALNLLALFHFARGNKAVKVFKRELHPADLMKSLVVTMMAILLVFGATLILTITEKHSLLELLFEVCSAFGTTGLSLGITADLSSVGKCVIMIVMFIGRIGILTFLYLIGRKEIEANYHYPKERVIIG</sequence>
<proteinExistence type="inferred from homology"/>
<reference key="1">
    <citation type="journal article" date="1997" name="Nature">
        <title>The complete genome sequence of the Gram-positive bacterium Bacillus subtilis.</title>
        <authorList>
            <person name="Kunst F."/>
            <person name="Ogasawara N."/>
            <person name="Moszer I."/>
            <person name="Albertini A.M."/>
            <person name="Alloni G."/>
            <person name="Azevedo V."/>
            <person name="Bertero M.G."/>
            <person name="Bessieres P."/>
            <person name="Bolotin A."/>
            <person name="Borchert S."/>
            <person name="Borriss R."/>
            <person name="Boursier L."/>
            <person name="Brans A."/>
            <person name="Braun M."/>
            <person name="Brignell S.C."/>
            <person name="Bron S."/>
            <person name="Brouillet S."/>
            <person name="Bruschi C.V."/>
            <person name="Caldwell B."/>
            <person name="Capuano V."/>
            <person name="Carter N.M."/>
            <person name="Choi S.-K."/>
            <person name="Codani J.-J."/>
            <person name="Connerton I.F."/>
            <person name="Cummings N.J."/>
            <person name="Daniel R.A."/>
            <person name="Denizot F."/>
            <person name="Devine K.M."/>
            <person name="Duesterhoeft A."/>
            <person name="Ehrlich S.D."/>
            <person name="Emmerson P.T."/>
            <person name="Entian K.-D."/>
            <person name="Errington J."/>
            <person name="Fabret C."/>
            <person name="Ferrari E."/>
            <person name="Foulger D."/>
            <person name="Fritz C."/>
            <person name="Fujita M."/>
            <person name="Fujita Y."/>
            <person name="Fuma S."/>
            <person name="Galizzi A."/>
            <person name="Galleron N."/>
            <person name="Ghim S.-Y."/>
            <person name="Glaser P."/>
            <person name="Goffeau A."/>
            <person name="Golightly E.J."/>
            <person name="Grandi G."/>
            <person name="Guiseppi G."/>
            <person name="Guy B.J."/>
            <person name="Haga K."/>
            <person name="Haiech J."/>
            <person name="Harwood C.R."/>
            <person name="Henaut A."/>
            <person name="Hilbert H."/>
            <person name="Holsappel S."/>
            <person name="Hosono S."/>
            <person name="Hullo M.-F."/>
            <person name="Itaya M."/>
            <person name="Jones L.-M."/>
            <person name="Joris B."/>
            <person name="Karamata D."/>
            <person name="Kasahara Y."/>
            <person name="Klaerr-Blanchard M."/>
            <person name="Klein C."/>
            <person name="Kobayashi Y."/>
            <person name="Koetter P."/>
            <person name="Koningstein G."/>
            <person name="Krogh S."/>
            <person name="Kumano M."/>
            <person name="Kurita K."/>
            <person name="Lapidus A."/>
            <person name="Lardinois S."/>
            <person name="Lauber J."/>
            <person name="Lazarevic V."/>
            <person name="Lee S.-M."/>
            <person name="Levine A."/>
            <person name="Liu H."/>
            <person name="Masuda S."/>
            <person name="Mauel C."/>
            <person name="Medigue C."/>
            <person name="Medina N."/>
            <person name="Mellado R.P."/>
            <person name="Mizuno M."/>
            <person name="Moestl D."/>
            <person name="Nakai S."/>
            <person name="Noback M."/>
            <person name="Noone D."/>
            <person name="O'Reilly M."/>
            <person name="Ogawa K."/>
            <person name="Ogiwara A."/>
            <person name="Oudega B."/>
            <person name="Park S.-H."/>
            <person name="Parro V."/>
            <person name="Pohl T.M."/>
            <person name="Portetelle D."/>
            <person name="Porwollik S."/>
            <person name="Prescott A.M."/>
            <person name="Presecan E."/>
            <person name="Pujic P."/>
            <person name="Purnelle B."/>
            <person name="Rapoport G."/>
            <person name="Rey M."/>
            <person name="Reynolds S."/>
            <person name="Rieger M."/>
            <person name="Rivolta C."/>
            <person name="Rocha E."/>
            <person name="Roche B."/>
            <person name="Rose M."/>
            <person name="Sadaie Y."/>
            <person name="Sato T."/>
            <person name="Scanlan E."/>
            <person name="Schleich S."/>
            <person name="Schroeter R."/>
            <person name="Scoffone F."/>
            <person name="Sekiguchi J."/>
            <person name="Sekowska A."/>
            <person name="Seror S.J."/>
            <person name="Serror P."/>
            <person name="Shin B.-S."/>
            <person name="Soldo B."/>
            <person name="Sorokin A."/>
            <person name="Tacconi E."/>
            <person name="Takagi T."/>
            <person name="Takahashi H."/>
            <person name="Takemaru K."/>
            <person name="Takeuchi M."/>
            <person name="Tamakoshi A."/>
            <person name="Tanaka T."/>
            <person name="Terpstra P."/>
            <person name="Tognoni A."/>
            <person name="Tosato V."/>
            <person name="Uchiyama S."/>
            <person name="Vandenbol M."/>
            <person name="Vannier F."/>
            <person name="Vassarotti A."/>
            <person name="Viari A."/>
            <person name="Wambutt R."/>
            <person name="Wedler E."/>
            <person name="Wedler H."/>
            <person name="Weitzenegger T."/>
            <person name="Winters P."/>
            <person name="Wipat A."/>
            <person name="Yamamoto H."/>
            <person name="Yamane K."/>
            <person name="Yasumoto K."/>
            <person name="Yata K."/>
            <person name="Yoshida K."/>
            <person name="Yoshikawa H.-F."/>
            <person name="Zumstein E."/>
            <person name="Yoshikawa H."/>
            <person name="Danchin A."/>
        </authorList>
    </citation>
    <scope>NUCLEOTIDE SEQUENCE [LARGE SCALE GENOMIC DNA]</scope>
    <source>
        <strain>168</strain>
    </source>
</reference>
<reference key="2">
    <citation type="journal article" date="2003" name="J. Bacteriol.">
        <title>KtrAB and KtrCD: two K+ uptake systems in Bacillus subtilis and their role in adaptation to hypertonicity.</title>
        <authorList>
            <person name="Holtmann G."/>
            <person name="Bakker E.P."/>
            <person name="Uozumi N."/>
            <person name="Bremer E."/>
        </authorList>
    </citation>
    <scope>FUNCTION</scope>
    <scope>DISRUPTION PHENOTYPE</scope>
</reference>
<evidence type="ECO:0000250" key="1"/>
<evidence type="ECO:0000255" key="2"/>
<evidence type="ECO:0000269" key="3">
    <source>
    </source>
</evidence>
<evidence type="ECO:0000305" key="4"/>
<feature type="chain" id="PRO_0000360620" description="Ktr system potassium uptake protein D">
    <location>
        <begin position="1"/>
        <end position="449"/>
    </location>
</feature>
<feature type="transmembrane region" description="Helical" evidence="2">
    <location>
        <begin position="17"/>
        <end position="37"/>
    </location>
</feature>
<feature type="transmembrane region" description="Helical" evidence="2">
    <location>
        <begin position="46"/>
        <end position="66"/>
    </location>
</feature>
<feature type="transmembrane region" description="Helical" evidence="2">
    <location>
        <begin position="75"/>
        <end position="95"/>
    </location>
</feature>
<feature type="transmembrane region" description="Helical" evidence="2">
    <location>
        <begin position="133"/>
        <end position="153"/>
    </location>
</feature>
<feature type="transmembrane region" description="Helical" evidence="2">
    <location>
        <begin position="194"/>
        <end position="214"/>
    </location>
</feature>
<feature type="transmembrane region" description="Helical" evidence="2">
    <location>
        <begin position="235"/>
        <end position="255"/>
    </location>
</feature>
<feature type="transmembrane region" description="Helical" evidence="2">
    <location>
        <begin position="297"/>
        <end position="317"/>
    </location>
</feature>
<feature type="transmembrane region" description="Helical" evidence="2">
    <location>
        <begin position="355"/>
        <end position="375"/>
    </location>
</feature>
<feature type="transmembrane region" description="Helical" evidence="2">
    <location>
        <begin position="380"/>
        <end position="400"/>
    </location>
</feature>
<feature type="transmembrane region" description="Helical" evidence="2">
    <location>
        <begin position="411"/>
        <end position="431"/>
    </location>
</feature>
<accession>O31658</accession>